<keyword id="KW-0343">GTPase activation</keyword>
<keyword id="KW-0597">Phosphoprotein</keyword>
<keyword id="KW-1185">Reference proteome</keyword>
<reference evidence="8" key="1">
    <citation type="journal article" date="2004" name="Nature">
        <title>Genome sequence of the Brown Norway rat yields insights into mammalian evolution.</title>
        <authorList>
            <person name="Gibbs R.A."/>
            <person name="Weinstock G.M."/>
            <person name="Metzker M.L."/>
            <person name="Muzny D.M."/>
            <person name="Sodergren E.J."/>
            <person name="Scherer S."/>
            <person name="Scott G."/>
            <person name="Steffen D."/>
            <person name="Worley K.C."/>
            <person name="Burch P.E."/>
            <person name="Okwuonu G."/>
            <person name="Hines S."/>
            <person name="Lewis L."/>
            <person name="Deramo C."/>
            <person name="Delgado O."/>
            <person name="Dugan-Rocha S."/>
            <person name="Miner G."/>
            <person name="Morgan M."/>
            <person name="Hawes A."/>
            <person name="Gill R."/>
            <person name="Holt R.A."/>
            <person name="Adams M.D."/>
            <person name="Amanatides P.G."/>
            <person name="Baden-Tillson H."/>
            <person name="Barnstead M."/>
            <person name="Chin S."/>
            <person name="Evans C.A."/>
            <person name="Ferriera S."/>
            <person name="Fosler C."/>
            <person name="Glodek A."/>
            <person name="Gu Z."/>
            <person name="Jennings D."/>
            <person name="Kraft C.L."/>
            <person name="Nguyen T."/>
            <person name="Pfannkoch C.M."/>
            <person name="Sitter C."/>
            <person name="Sutton G.G."/>
            <person name="Venter J.C."/>
            <person name="Woodage T."/>
            <person name="Smith D."/>
            <person name="Lee H.-M."/>
            <person name="Gustafson E."/>
            <person name="Cahill P."/>
            <person name="Kana A."/>
            <person name="Doucette-Stamm L."/>
            <person name="Weinstock K."/>
            <person name="Fechtel K."/>
            <person name="Weiss R.B."/>
            <person name="Dunn D.M."/>
            <person name="Green E.D."/>
            <person name="Blakesley R.W."/>
            <person name="Bouffard G.G."/>
            <person name="De Jong P.J."/>
            <person name="Osoegawa K."/>
            <person name="Zhu B."/>
            <person name="Marra M."/>
            <person name="Schein J."/>
            <person name="Bosdet I."/>
            <person name="Fjell C."/>
            <person name="Jones S."/>
            <person name="Krzywinski M."/>
            <person name="Mathewson C."/>
            <person name="Siddiqui A."/>
            <person name="Wye N."/>
            <person name="McPherson J."/>
            <person name="Zhao S."/>
            <person name="Fraser C.M."/>
            <person name="Shetty J."/>
            <person name="Shatsman S."/>
            <person name="Geer K."/>
            <person name="Chen Y."/>
            <person name="Abramzon S."/>
            <person name="Nierman W.C."/>
            <person name="Havlak P.H."/>
            <person name="Chen R."/>
            <person name="Durbin K.J."/>
            <person name="Egan A."/>
            <person name="Ren Y."/>
            <person name="Song X.-Z."/>
            <person name="Li B."/>
            <person name="Liu Y."/>
            <person name="Qin X."/>
            <person name="Cawley S."/>
            <person name="Cooney A.J."/>
            <person name="D'Souza L.M."/>
            <person name="Martin K."/>
            <person name="Wu J.Q."/>
            <person name="Gonzalez-Garay M.L."/>
            <person name="Jackson A.R."/>
            <person name="Kalafus K.J."/>
            <person name="McLeod M.P."/>
            <person name="Milosavljevic A."/>
            <person name="Virk D."/>
            <person name="Volkov A."/>
            <person name="Wheeler D.A."/>
            <person name="Zhang Z."/>
            <person name="Bailey J.A."/>
            <person name="Eichler E.E."/>
            <person name="Tuzun E."/>
            <person name="Birney E."/>
            <person name="Mongin E."/>
            <person name="Ureta-Vidal A."/>
            <person name="Woodwark C."/>
            <person name="Zdobnov E."/>
            <person name="Bork P."/>
            <person name="Suyama M."/>
            <person name="Torrents D."/>
            <person name="Alexandersson M."/>
            <person name="Trask B.J."/>
            <person name="Young J.M."/>
            <person name="Huang H."/>
            <person name="Wang H."/>
            <person name="Xing H."/>
            <person name="Daniels S."/>
            <person name="Gietzen D."/>
            <person name="Schmidt J."/>
            <person name="Stevens K."/>
            <person name="Vitt U."/>
            <person name="Wingrove J."/>
            <person name="Camara F."/>
            <person name="Mar Alba M."/>
            <person name="Abril J.F."/>
            <person name="Guigo R."/>
            <person name="Smit A."/>
            <person name="Dubchak I."/>
            <person name="Rubin E.M."/>
            <person name="Couronne O."/>
            <person name="Poliakov A."/>
            <person name="Huebner N."/>
            <person name="Ganten D."/>
            <person name="Goesele C."/>
            <person name="Hummel O."/>
            <person name="Kreitler T."/>
            <person name="Lee Y.-A."/>
            <person name="Monti J."/>
            <person name="Schulz H."/>
            <person name="Zimdahl H."/>
            <person name="Himmelbauer H."/>
            <person name="Lehrach H."/>
            <person name="Jacob H.J."/>
            <person name="Bromberg S."/>
            <person name="Gullings-Handley J."/>
            <person name="Jensen-Seaman M.I."/>
            <person name="Kwitek A.E."/>
            <person name="Lazar J."/>
            <person name="Pasko D."/>
            <person name="Tonellato P.J."/>
            <person name="Twigger S."/>
            <person name="Ponting C.P."/>
            <person name="Duarte J.M."/>
            <person name="Rice S."/>
            <person name="Goodstadt L."/>
            <person name="Beatson S.A."/>
            <person name="Emes R.D."/>
            <person name="Winter E.E."/>
            <person name="Webber C."/>
            <person name="Brandt P."/>
            <person name="Nyakatura G."/>
            <person name="Adetobi M."/>
            <person name="Chiaromonte F."/>
            <person name="Elnitski L."/>
            <person name="Eswara P."/>
            <person name="Hardison R.C."/>
            <person name="Hou M."/>
            <person name="Kolbe D."/>
            <person name="Makova K."/>
            <person name="Miller W."/>
            <person name="Nekrutenko A."/>
            <person name="Riemer C."/>
            <person name="Schwartz S."/>
            <person name="Taylor J."/>
            <person name="Yang S."/>
            <person name="Zhang Y."/>
            <person name="Lindpaintner K."/>
            <person name="Andrews T.D."/>
            <person name="Caccamo M."/>
            <person name="Clamp M."/>
            <person name="Clarke L."/>
            <person name="Curwen V."/>
            <person name="Durbin R.M."/>
            <person name="Eyras E."/>
            <person name="Searle S.M."/>
            <person name="Cooper G.M."/>
            <person name="Batzoglou S."/>
            <person name="Brudno M."/>
            <person name="Sidow A."/>
            <person name="Stone E.A."/>
            <person name="Payseur B.A."/>
            <person name="Bourque G."/>
            <person name="Lopez-Otin C."/>
            <person name="Puente X.S."/>
            <person name="Chakrabarti K."/>
            <person name="Chatterji S."/>
            <person name="Dewey C."/>
            <person name="Pachter L."/>
            <person name="Bray N."/>
            <person name="Yap V.B."/>
            <person name="Caspi A."/>
            <person name="Tesler G."/>
            <person name="Pevzner P.A."/>
            <person name="Haussler D."/>
            <person name="Roskin K.M."/>
            <person name="Baertsch R."/>
            <person name="Clawson H."/>
            <person name="Furey T.S."/>
            <person name="Hinrichs A.S."/>
            <person name="Karolchik D."/>
            <person name="Kent W.J."/>
            <person name="Rosenbloom K.R."/>
            <person name="Trumbower H."/>
            <person name="Weirauch M."/>
            <person name="Cooper D.N."/>
            <person name="Stenson P.D."/>
            <person name="Ma B."/>
            <person name="Brent M."/>
            <person name="Arumugam M."/>
            <person name="Shteynberg D."/>
            <person name="Copley R.R."/>
            <person name="Taylor M.S."/>
            <person name="Riethman H."/>
            <person name="Mudunuri U."/>
            <person name="Peterson J."/>
            <person name="Guyer M."/>
            <person name="Felsenfeld A."/>
            <person name="Old S."/>
            <person name="Mockrin S."/>
            <person name="Collins F.S."/>
        </authorList>
    </citation>
    <scope>NUCLEOTIDE SEQUENCE [LARGE SCALE GENOMIC DNA]</scope>
    <source>
        <strain evidence="5">Brown Norway</strain>
    </source>
</reference>
<reference evidence="8" key="2">
    <citation type="journal article" date="2009" name="J. Biol. Chem.">
        <title>Tuberous sclerosis tumor suppressor complex-like complexes act as GTPase-activating proteins for Ral GTPases.</title>
        <authorList>
            <person name="Shirakawa R."/>
            <person name="Fukai S."/>
            <person name="Kawato M."/>
            <person name="Higashi T."/>
            <person name="Kondo H."/>
            <person name="Ikeda T."/>
            <person name="Nakayama E."/>
            <person name="Okawa K."/>
            <person name="Nureki O."/>
            <person name="Kimura T."/>
            <person name="Kita T."/>
            <person name="Horiuchi H."/>
        </authorList>
    </citation>
    <scope>FUNCTION</scope>
    <scope>SUBUNIT</scope>
    <scope>TISSUE SPECIFICITY</scope>
</reference>
<reference key="3">
    <citation type="journal article" date="2012" name="Nat. Commun.">
        <title>Quantitative maps of protein phosphorylation sites across 14 different rat organs and tissues.</title>
        <authorList>
            <person name="Lundby A."/>
            <person name="Secher A."/>
            <person name="Lage K."/>
            <person name="Nordsborg N.B."/>
            <person name="Dmytriyev A."/>
            <person name="Lundby C."/>
            <person name="Olsen J.V."/>
        </authorList>
    </citation>
    <scope>PHOSPHORYLATION [LARGE SCALE ANALYSIS] AT THR-363</scope>
    <scope>IDENTIFICATION BY MASS SPECTROMETRY [LARGE SCALE ANALYSIS]</scope>
</reference>
<gene>
    <name evidence="7" type="primary">Ralgapb</name>
</gene>
<protein>
    <recommendedName>
        <fullName>Ral GTPase-activating protein subunit beta</fullName>
    </recommendedName>
    <alternativeName>
        <fullName evidence="7">p170</fullName>
    </alternativeName>
</protein>
<evidence type="ECO:0000250" key="1">
    <source>
        <dbReference type="UniProtKB" id="Q86X10"/>
    </source>
</evidence>
<evidence type="ECO:0000250" key="2">
    <source>
        <dbReference type="UniProtKB" id="Q8BQZ4"/>
    </source>
</evidence>
<evidence type="ECO:0000255" key="3">
    <source>
        <dbReference type="PROSITE-ProRule" id="PRU00165"/>
    </source>
</evidence>
<evidence type="ECO:0000256" key="4">
    <source>
        <dbReference type="SAM" id="MobiDB-lite"/>
    </source>
</evidence>
<evidence type="ECO:0000269" key="5">
    <source>
    </source>
</evidence>
<evidence type="ECO:0000269" key="6">
    <source>
    </source>
</evidence>
<evidence type="ECO:0000303" key="7">
    <source>
    </source>
</evidence>
<evidence type="ECO:0000305" key="8"/>
<evidence type="ECO:0007744" key="9">
    <source>
    </source>
</evidence>
<name>RLGPB_RAT</name>
<sequence length="1484" mass="165367">MYSEWRSLHLVIQNDQGHTSVLHSYPESVGREVANAVVRPLGQALGHSPVSASQSLLYTDKDVKWTMEVICYGLTLPLDGETVKYCVDVYTDWIMALVLPKDSIPLPVIKEPNLYIQSILKHLQNLFVPRQEQGSSQIRLCLQVLRAIQKLARESSIMARETWEVLLLFLLQINDILLAPPTVQGGIAENLAEKLIGVLFEVWLLACTRCFPTPPYWKTAKEMVANWRHHPAVVEQWSKVICALTSRLLRFTYGPSFPPFKVPDEDANLIPPEMDNECIAQTWFRFLHMLSNPVDLSNPAVISSTPKFQEQFLNVSGMPQELSQYPCLKHLPQIFFRAMRGISCLVDAFLGISRPRSDSAPPTPVNRLSMPQSAAVNTTPPHNRRHRAVTVNKATMKTSTVTTAHTSKVQHQASSTSPLSSPNQTSSEPRPLPAPRRPKVNSILNLFGSWLFDAAFVHCKLHNGINRDSSMTASFIQILLSYKSSIATQASMEFRRKGSQMSTDTMVSNPVFDASEFPDNYEAGRAEACGTLCRIFCSKKTGEEILPAYLSSVILNSPPLFCCDLKGIDVVVPYFISALETILPDRELSKFKSYVNPTELRRSSINILLSLLPLPHHFGTVRSEVVLEGKFSNDDSSSYDKPITFLSLKLRLVNILIGALQTETDPNNTQMILGAMLNIVQDSALLEALGCQMEMGGGENNLKSHSRTNSGISSASGGSTEPTTPDSERPAQALLRDYGSTDSAAGLLIRSIHLVTQRLNSQWRQDMSISLAALELLSGLAKVKVMVDLGDRKRAISSVCSYIVYQCSRPAPLHSRDLHSMIVAAFQCLCVWLTEHPDMLDEKDCLKEVLEIVELGISGSKSKNSEQEVKYKGDKEPNPASMRVKDAAEATLTCIMQLLGAFPSPSGPASPCSLVNETTLIKYSRLPTINKHSFRYFVLDNSVILAMLEQPLGNEQNDFFPSVTVLVRGMSGRLAWAQQLCLLPRGAKANQKLFVPEPRPVPKNDVGFKYSVKHRPFPEEVDKIPFVKADLSIPDLHEIVTEELEERHEKLRSGMAQQIAYEMHLEQQSEGELQKRSFPDPVTDCKPPPPAQEFQTARLFLSHFGFLSLEALKEPANSRLPPHLIALDSTIPGFFDDIGYLDLLPCRPFDTVFIFYMKPGQKTNQEILKNVESSRNVQPHFLEFLLSLGWSVDVGRHPGWTGHVSTSWSINSCDDGEGSEQDEVTSSEDVGASIFNGQKKVLYYADALTEIAFVVPSPVESLTDSLESNISDQDSDSNMDLMPGILKQPPLTLELVPNHTDSLNSSQRLSPSSRMKKLPQGRPVPPLGPETRVSVVWVERYDDIENFPLSDLMTEISTGVETTANSSTSLRSTTLEKEVPVIFIHPLNTGLFRIKIQGATGKFNMVIPLVDGMIVSRRALGFLVRQTVINICRRKRLESDSYSPPHVRRKQKITDIVNKYRNKQLEPEFYTALFQEVGLKNCSS</sequence>
<dbReference type="EMBL" id="AABR03025124">
    <property type="status" value="NOT_ANNOTATED_CDS"/>
    <property type="molecule type" value="Genomic_DNA"/>
</dbReference>
<dbReference type="EMBL" id="AABR03026826">
    <property type="status" value="NOT_ANNOTATED_CDS"/>
    <property type="molecule type" value="Genomic_DNA"/>
</dbReference>
<dbReference type="EMBL" id="AABR03027071">
    <property type="status" value="NOT_ANNOTATED_CDS"/>
    <property type="molecule type" value="Genomic_DNA"/>
</dbReference>
<dbReference type="EMBL" id="AABR03030442">
    <property type="status" value="NOT_ANNOTATED_CDS"/>
    <property type="molecule type" value="Genomic_DNA"/>
</dbReference>
<dbReference type="EMBL" id="AABR03031051">
    <property type="status" value="NOT_ANNOTATED_CDS"/>
    <property type="molecule type" value="Genomic_DNA"/>
</dbReference>
<dbReference type="EMBL" id="AABR03031170">
    <property type="status" value="NOT_ANNOTATED_CDS"/>
    <property type="molecule type" value="Genomic_DNA"/>
</dbReference>
<dbReference type="FunCoup" id="P86410">
    <property type="interactions" value="3999"/>
</dbReference>
<dbReference type="STRING" id="10116.ENSRNOP00000020556"/>
<dbReference type="GlyGen" id="P86410">
    <property type="glycosylation" value="2 sites"/>
</dbReference>
<dbReference type="iPTMnet" id="P86410"/>
<dbReference type="PhosphoSitePlus" id="P86410"/>
<dbReference type="jPOST" id="P86410"/>
<dbReference type="PaxDb" id="10116-ENSRNOP00000020556"/>
<dbReference type="AGR" id="RGD:1306861"/>
<dbReference type="RGD" id="1306861">
    <property type="gene designation" value="Ralgapb"/>
</dbReference>
<dbReference type="eggNOG" id="KOG3652">
    <property type="taxonomic scope" value="Eukaryota"/>
</dbReference>
<dbReference type="InParanoid" id="P86410"/>
<dbReference type="PRO" id="PR:P86410"/>
<dbReference type="Proteomes" id="UP000002494">
    <property type="component" value="Unplaced"/>
</dbReference>
<dbReference type="GO" id="GO:0005096">
    <property type="term" value="F:GTPase activator activity"/>
    <property type="evidence" value="ECO:0000314"/>
    <property type="project" value="UniProtKB"/>
</dbReference>
<dbReference type="GO" id="GO:0046982">
    <property type="term" value="F:protein heterodimerization activity"/>
    <property type="evidence" value="ECO:0000353"/>
    <property type="project" value="UniProtKB"/>
</dbReference>
<dbReference type="GO" id="GO:0090630">
    <property type="term" value="P:activation of GTPase activity"/>
    <property type="evidence" value="ECO:0000314"/>
    <property type="project" value="UniProtKB"/>
</dbReference>
<dbReference type="GO" id="GO:0032484">
    <property type="term" value="P:Ral protein signal transduction"/>
    <property type="evidence" value="ECO:0000266"/>
    <property type="project" value="RGD"/>
</dbReference>
<dbReference type="GO" id="GO:0060178">
    <property type="term" value="P:regulation of exocyst localization"/>
    <property type="evidence" value="ECO:0000266"/>
    <property type="project" value="RGD"/>
</dbReference>
<dbReference type="GO" id="GO:0032880">
    <property type="term" value="P:regulation of protein localization"/>
    <property type="evidence" value="ECO:0000266"/>
    <property type="project" value="RGD"/>
</dbReference>
<dbReference type="GO" id="GO:0051056">
    <property type="term" value="P:regulation of small GTPase mediated signal transduction"/>
    <property type="evidence" value="ECO:0007669"/>
    <property type="project" value="InterPro"/>
</dbReference>
<dbReference type="FunFam" id="3.40.50.11210:FF:000005">
    <property type="entry name" value="Ral GTPase-activating protein, beta subunit (non-catalytic)"/>
    <property type="match status" value="1"/>
</dbReference>
<dbReference type="Gene3D" id="3.40.50.11210">
    <property type="entry name" value="Rap/Ran-GAP"/>
    <property type="match status" value="1"/>
</dbReference>
<dbReference type="InterPro" id="IPR039930">
    <property type="entry name" value="RALGAPB"/>
</dbReference>
<dbReference type="InterPro" id="IPR035974">
    <property type="entry name" value="Rap/Ran-GAP_sf"/>
</dbReference>
<dbReference type="InterPro" id="IPR000331">
    <property type="entry name" value="Rap/Ran_GAP_dom"/>
</dbReference>
<dbReference type="InterPro" id="IPR046859">
    <property type="entry name" value="RGPA/RALGAPB_N"/>
</dbReference>
<dbReference type="PANTHER" id="PTHR21344">
    <property type="entry name" value="RAL GTPASE-ACTIVATING PROTEIN SUBUNIT BETA"/>
    <property type="match status" value="1"/>
</dbReference>
<dbReference type="PANTHER" id="PTHR21344:SF1">
    <property type="entry name" value="RAL GTPASE-ACTIVATING PROTEIN SUBUNIT BETA"/>
    <property type="match status" value="1"/>
</dbReference>
<dbReference type="Pfam" id="PF20412">
    <property type="entry name" value="RALGAPB_N"/>
    <property type="match status" value="1"/>
</dbReference>
<dbReference type="SUPFAM" id="SSF111347">
    <property type="entry name" value="Rap/Ran-GAP"/>
    <property type="match status" value="1"/>
</dbReference>
<dbReference type="PROSITE" id="PS50085">
    <property type="entry name" value="RAPGAP"/>
    <property type="match status" value="1"/>
</dbReference>
<proteinExistence type="evidence at protein level"/>
<accession>P86410</accession>
<comment type="function">
    <text evidence="6">Non-catalytic subunit of the heterodimeric RalGAP1 and RalGAP2 complexes which act as GTPase activators for the Ras-like small GTPases RALA and RALB.</text>
</comment>
<comment type="subunit">
    <text evidence="6">Component of the heterodimeric RalGAP1 complex with RALGAPA1 and of the heterodimeric RalGAP2 complex with RALGAPA2. Heterodimerization is required for activity.</text>
</comment>
<comment type="tissue specificity">
    <text evidence="6">Detected in brain, thymus, lung, heart, spleen, liver and testis (at protein level).</text>
</comment>
<feature type="chain" id="PRO_0000390693" description="Ral GTPase-activating protein subunit beta">
    <location>
        <begin position="1"/>
        <end position="1484"/>
    </location>
</feature>
<feature type="domain" description="Rap-GAP" evidence="3">
    <location>
        <begin position="1138"/>
        <end position="1382"/>
    </location>
</feature>
<feature type="region of interest" description="Disordered" evidence="4">
    <location>
        <begin position="355"/>
        <end position="437"/>
    </location>
</feature>
<feature type="region of interest" description="Disordered" evidence="4">
    <location>
        <begin position="697"/>
        <end position="728"/>
    </location>
</feature>
<feature type="region of interest" description="Disordered" evidence="4">
    <location>
        <begin position="1301"/>
        <end position="1325"/>
    </location>
</feature>
<feature type="compositionally biased region" description="Polar residues" evidence="4">
    <location>
        <begin position="369"/>
        <end position="381"/>
    </location>
</feature>
<feature type="compositionally biased region" description="Polar residues" evidence="4">
    <location>
        <begin position="392"/>
        <end position="428"/>
    </location>
</feature>
<feature type="compositionally biased region" description="Polar residues" evidence="4">
    <location>
        <begin position="701"/>
        <end position="725"/>
    </location>
</feature>
<feature type="compositionally biased region" description="Low complexity" evidence="4">
    <location>
        <begin position="1302"/>
        <end position="1313"/>
    </location>
</feature>
<feature type="modified residue" description="Phosphoserine" evidence="1">
    <location>
        <position position="359"/>
    </location>
</feature>
<feature type="modified residue" description="Phosphothreonine" evidence="9">
    <location>
        <position position="363"/>
    </location>
</feature>
<feature type="modified residue" description="Phosphothreonine" evidence="1">
    <location>
        <position position="379"/>
    </location>
</feature>
<feature type="modified residue" description="Phosphoserine" evidence="2">
    <location>
        <position position="421"/>
    </location>
</feature>
<feature type="modified residue" description="Phosphoserine" evidence="1">
    <location>
        <position position="710"/>
    </location>
</feature>
<feature type="modified residue" description="Phosphothreonine" evidence="1">
    <location>
        <position position="724"/>
    </location>
</feature>
<feature type="modified residue" description="Phosphoserine" evidence="1">
    <location>
        <position position="1275"/>
    </location>
</feature>
<organism>
    <name type="scientific">Rattus norvegicus</name>
    <name type="common">Rat</name>
    <dbReference type="NCBI Taxonomy" id="10116"/>
    <lineage>
        <taxon>Eukaryota</taxon>
        <taxon>Metazoa</taxon>
        <taxon>Chordata</taxon>
        <taxon>Craniata</taxon>
        <taxon>Vertebrata</taxon>
        <taxon>Euteleostomi</taxon>
        <taxon>Mammalia</taxon>
        <taxon>Eutheria</taxon>
        <taxon>Euarchontoglires</taxon>
        <taxon>Glires</taxon>
        <taxon>Rodentia</taxon>
        <taxon>Myomorpha</taxon>
        <taxon>Muroidea</taxon>
        <taxon>Muridae</taxon>
        <taxon>Murinae</taxon>
        <taxon>Rattus</taxon>
    </lineage>
</organism>